<evidence type="ECO:0000255" key="1">
    <source>
        <dbReference type="HAMAP-Rule" id="MF_01433"/>
    </source>
</evidence>
<protein>
    <recommendedName>
        <fullName evidence="1">Pyrimidine-specific ribonucleoside hydrolase RihB</fullName>
        <ecNumber evidence="1">3.2.2.8</ecNumber>
    </recommendedName>
    <alternativeName>
        <fullName evidence="1">Cytidine/uridine-specific hydrolase</fullName>
    </alternativeName>
</protein>
<keyword id="KW-0106">Calcium</keyword>
<keyword id="KW-0326">Glycosidase</keyword>
<keyword id="KW-0378">Hydrolase</keyword>
<keyword id="KW-0479">Metal-binding</keyword>
<feature type="chain" id="PRO_1000024414" description="Pyrimidine-specific ribonucleoside hydrolase RihB">
    <location>
        <begin position="1"/>
        <end position="313"/>
    </location>
</feature>
<feature type="active site" description="Proton acceptor" evidence="1">
    <location>
        <position position="11"/>
    </location>
</feature>
<feature type="binding site" evidence="1">
    <location>
        <position position="11"/>
    </location>
    <ligand>
        <name>Ca(2+)</name>
        <dbReference type="ChEBI" id="CHEBI:29108"/>
    </ligand>
</feature>
<feature type="binding site" evidence="1">
    <location>
        <position position="16"/>
    </location>
    <ligand>
        <name>Ca(2+)</name>
        <dbReference type="ChEBI" id="CHEBI:29108"/>
    </ligand>
</feature>
<feature type="binding site" evidence="1">
    <location>
        <position position="124"/>
    </location>
    <ligand>
        <name>Ca(2+)</name>
        <dbReference type="ChEBI" id="CHEBI:29108"/>
    </ligand>
</feature>
<feature type="binding site" evidence="1">
    <location>
        <position position="227"/>
    </location>
    <ligand>
        <name>substrate</name>
    </ligand>
</feature>
<feature type="binding site" evidence="1">
    <location>
        <position position="239"/>
    </location>
    <ligand>
        <name>substrate</name>
    </ligand>
</feature>
<feature type="binding site" evidence="1">
    <location>
        <position position="240"/>
    </location>
    <ligand>
        <name>Ca(2+)</name>
        <dbReference type="ChEBI" id="CHEBI:29108"/>
    </ligand>
</feature>
<comment type="function">
    <text evidence="1">Hydrolyzes cytidine or uridine to ribose and cytosine or uracil, respectively. Has a clear preference for cytidine over uridine. Strictly specific for ribonucleosides.</text>
</comment>
<comment type="catalytic activity">
    <reaction evidence="1">
        <text>a pyrimidine ribonucleoside + H2O = a pyrimidine nucleobase + D-ribose</text>
        <dbReference type="Rhea" id="RHEA:56816"/>
        <dbReference type="ChEBI" id="CHEBI:15377"/>
        <dbReference type="ChEBI" id="CHEBI:26432"/>
        <dbReference type="ChEBI" id="CHEBI:47013"/>
        <dbReference type="ChEBI" id="CHEBI:141014"/>
        <dbReference type="EC" id="3.2.2.8"/>
    </reaction>
</comment>
<comment type="cofactor">
    <cofactor evidence="1">
        <name>Ca(2+)</name>
        <dbReference type="ChEBI" id="CHEBI:29108"/>
    </cofactor>
    <text evidence="1">Binds 1 Ca(2+) ion per monomer.</text>
</comment>
<comment type="subunit">
    <text evidence="1">Homotetramer.</text>
</comment>
<comment type="similarity">
    <text evidence="1">Belongs to the IUNH family. RihB subfamily.</text>
</comment>
<sequence length="313" mass="33843">MEKRKIILDCEPGHDDAIAMMMAAKHPAIDLLGITIVAGNQTLDKTLINGLNVCQKLEINVPVYAGMPQPIMRKQIVADNIHGETGLDGPVFEPLTRQAESTHAVKYIIDTLMASDGDITLVPVGPLSNIAVAMRMQPAILPKIREIVLMGGAYGTGNFTPSAEFNIFADPEAARVVFTSGVPLVMMGLDLTNQTVCTPDVIARMERVGGPAGELFSDIMNFTLKTQFEYYGLAGGPVHDATCIGYLINPDGIKTQDMYVEVDVNSGPCYGRTVCDELGVLGKPANTKVGITIDTDWFWGLVEECVRGYIKTH</sequence>
<dbReference type="EC" id="3.2.2.8" evidence="1"/>
<dbReference type="EMBL" id="CP000266">
    <property type="protein sequence ID" value="ABF04353.1"/>
    <property type="molecule type" value="Genomic_DNA"/>
</dbReference>
<dbReference type="RefSeq" id="WP_000415462.1">
    <property type="nucleotide sequence ID" value="NC_008258.1"/>
</dbReference>
<dbReference type="SMR" id="Q0T2W2"/>
<dbReference type="KEGG" id="sfv:SFV_2237"/>
<dbReference type="HOGENOM" id="CLU_036838_2_0_6"/>
<dbReference type="Proteomes" id="UP000000659">
    <property type="component" value="Chromosome"/>
</dbReference>
<dbReference type="GO" id="GO:0005829">
    <property type="term" value="C:cytosol"/>
    <property type="evidence" value="ECO:0007669"/>
    <property type="project" value="TreeGrafter"/>
</dbReference>
<dbReference type="GO" id="GO:0005509">
    <property type="term" value="F:calcium ion binding"/>
    <property type="evidence" value="ECO:0007669"/>
    <property type="project" value="UniProtKB-UniRule"/>
</dbReference>
<dbReference type="GO" id="GO:0008477">
    <property type="term" value="F:purine nucleosidase activity"/>
    <property type="evidence" value="ECO:0007669"/>
    <property type="project" value="TreeGrafter"/>
</dbReference>
<dbReference type="GO" id="GO:0050263">
    <property type="term" value="F:ribosylpyrimidine nucleosidase activity"/>
    <property type="evidence" value="ECO:0007669"/>
    <property type="project" value="UniProtKB-UniRule"/>
</dbReference>
<dbReference type="GO" id="GO:0006152">
    <property type="term" value="P:purine nucleoside catabolic process"/>
    <property type="evidence" value="ECO:0007669"/>
    <property type="project" value="TreeGrafter"/>
</dbReference>
<dbReference type="GO" id="GO:0006206">
    <property type="term" value="P:pyrimidine nucleobase metabolic process"/>
    <property type="evidence" value="ECO:0007669"/>
    <property type="project" value="UniProtKB-UniRule"/>
</dbReference>
<dbReference type="GO" id="GO:0046133">
    <property type="term" value="P:pyrimidine ribonucleoside catabolic process"/>
    <property type="evidence" value="ECO:0007669"/>
    <property type="project" value="InterPro"/>
</dbReference>
<dbReference type="CDD" id="cd02651">
    <property type="entry name" value="nuc_hydro_IU_UC_XIUA"/>
    <property type="match status" value="1"/>
</dbReference>
<dbReference type="FunFam" id="3.90.245.10:FF:000003">
    <property type="entry name" value="Pyrimidine-specific ribonucleoside hydrolase RihB"/>
    <property type="match status" value="1"/>
</dbReference>
<dbReference type="Gene3D" id="3.90.245.10">
    <property type="entry name" value="Ribonucleoside hydrolase-like"/>
    <property type="match status" value="1"/>
</dbReference>
<dbReference type="HAMAP" id="MF_01433">
    <property type="entry name" value="Pyrim_hydro_RihB"/>
    <property type="match status" value="1"/>
</dbReference>
<dbReference type="InterPro" id="IPR001910">
    <property type="entry name" value="Inosine/uridine_hydrolase_dom"/>
</dbReference>
<dbReference type="InterPro" id="IPR023186">
    <property type="entry name" value="IUNH"/>
</dbReference>
<dbReference type="InterPro" id="IPR022977">
    <property type="entry name" value="Pyrim_hydro_RihB"/>
</dbReference>
<dbReference type="InterPro" id="IPR036452">
    <property type="entry name" value="Ribo_hydro-like"/>
</dbReference>
<dbReference type="NCBIfam" id="NF007417">
    <property type="entry name" value="PRK09955.1"/>
    <property type="match status" value="1"/>
</dbReference>
<dbReference type="PANTHER" id="PTHR12304">
    <property type="entry name" value="INOSINE-URIDINE PREFERRING NUCLEOSIDE HYDROLASE"/>
    <property type="match status" value="1"/>
</dbReference>
<dbReference type="PANTHER" id="PTHR12304:SF4">
    <property type="entry name" value="URIDINE NUCLEOSIDASE"/>
    <property type="match status" value="1"/>
</dbReference>
<dbReference type="Pfam" id="PF01156">
    <property type="entry name" value="IU_nuc_hydro"/>
    <property type="match status" value="1"/>
</dbReference>
<dbReference type="SUPFAM" id="SSF53590">
    <property type="entry name" value="Nucleoside hydrolase"/>
    <property type="match status" value="1"/>
</dbReference>
<reference key="1">
    <citation type="journal article" date="2006" name="BMC Genomics">
        <title>Complete genome sequence of Shigella flexneri 5b and comparison with Shigella flexneri 2a.</title>
        <authorList>
            <person name="Nie H."/>
            <person name="Yang F."/>
            <person name="Zhang X."/>
            <person name="Yang J."/>
            <person name="Chen L."/>
            <person name="Wang J."/>
            <person name="Xiong Z."/>
            <person name="Peng J."/>
            <person name="Sun L."/>
            <person name="Dong J."/>
            <person name="Xue Y."/>
            <person name="Xu X."/>
            <person name="Chen S."/>
            <person name="Yao Z."/>
            <person name="Shen Y."/>
            <person name="Jin Q."/>
        </authorList>
    </citation>
    <scope>NUCLEOTIDE SEQUENCE [LARGE SCALE GENOMIC DNA]</scope>
    <source>
        <strain>8401</strain>
    </source>
</reference>
<organism>
    <name type="scientific">Shigella flexneri serotype 5b (strain 8401)</name>
    <dbReference type="NCBI Taxonomy" id="373384"/>
    <lineage>
        <taxon>Bacteria</taxon>
        <taxon>Pseudomonadati</taxon>
        <taxon>Pseudomonadota</taxon>
        <taxon>Gammaproteobacteria</taxon>
        <taxon>Enterobacterales</taxon>
        <taxon>Enterobacteriaceae</taxon>
        <taxon>Shigella</taxon>
    </lineage>
</organism>
<gene>
    <name evidence="1" type="primary">rihB</name>
    <name type="ordered locus">SFV_2237</name>
</gene>
<accession>Q0T2W2</accession>
<proteinExistence type="inferred from homology"/>
<name>RIHB_SHIF8</name>